<organism>
    <name type="scientific">Mycolicibacterium smegmatis (strain ATCC 700084 / mc(2)155)</name>
    <name type="common">Mycobacterium smegmatis</name>
    <dbReference type="NCBI Taxonomy" id="246196"/>
    <lineage>
        <taxon>Bacteria</taxon>
        <taxon>Bacillati</taxon>
        <taxon>Actinomycetota</taxon>
        <taxon>Actinomycetes</taxon>
        <taxon>Mycobacteriales</taxon>
        <taxon>Mycobacteriaceae</taxon>
        <taxon>Mycolicibacterium</taxon>
    </lineage>
</organism>
<protein>
    <recommendedName>
        <fullName>Ribonuclease 3</fullName>
        <ecNumber>3.1.26.3</ecNumber>
    </recommendedName>
    <alternativeName>
        <fullName>Ribonuclease III</fullName>
        <shortName>RNase III</shortName>
    </alternativeName>
</protein>
<comment type="function">
    <text evidence="1 2 3">Digests double-stranded RNA. Involved in the processing of primary rRNA transcript to yield the immediate precursors to the all rRNAs (23S, 16S and 5S) (Probable). Processes some mRNAs, and tRNAs when they are encoded in the rRNA operon. Processes pre-crRNA and tracrRNA of type II CRISPR loci if present in the organism (By similarity).</text>
</comment>
<comment type="catalytic activity">
    <reaction>
        <text>Endonucleolytic cleavage to 5'-phosphomonoester.</text>
        <dbReference type="EC" id="3.1.26.3"/>
    </reaction>
</comment>
<comment type="cofactor">
    <cofactor evidence="1">
        <name>Mg(2+)</name>
        <dbReference type="ChEBI" id="CHEBI:18420"/>
    </cofactor>
</comment>
<comment type="subunit">
    <text evidence="1">Homodimer.</text>
</comment>
<comment type="subcellular location">
    <subcellularLocation>
        <location evidence="1">Cytoplasm</location>
    </subcellularLocation>
</comment>
<comment type="similarity">
    <text evidence="3">Belongs to the ribonuclease III family.</text>
</comment>
<name>RNC_MYCS2</name>
<feature type="chain" id="PRO_0000429580" description="Ribonuclease 3">
    <location>
        <begin position="1"/>
        <end position="230"/>
    </location>
</feature>
<feature type="domain" description="RNase III">
    <location>
        <begin position="19"/>
        <end position="134"/>
    </location>
</feature>
<feature type="domain" description="DRBM">
    <location>
        <begin position="161"/>
        <end position="229"/>
    </location>
</feature>
<feature type="active site" evidence="1">
    <location>
        <position position="48"/>
    </location>
</feature>
<feature type="binding site" evidence="1">
    <location>
        <position position="44"/>
    </location>
    <ligand>
        <name>Mg(2+)</name>
        <dbReference type="ChEBI" id="CHEBI:18420"/>
    </ligand>
</feature>
<feature type="binding site" evidence="1">
    <location>
        <position position="120"/>
    </location>
    <ligand>
        <name>Mg(2+)</name>
        <dbReference type="ChEBI" id="CHEBI:18420"/>
    </ligand>
</feature>
<feature type="binding site" evidence="1">
    <location>
        <position position="123"/>
    </location>
    <ligand>
        <name>Mg(2+)</name>
        <dbReference type="ChEBI" id="CHEBI:18420"/>
    </ligand>
</feature>
<keyword id="KW-0963">Cytoplasm</keyword>
<keyword id="KW-0255">Endonuclease</keyword>
<keyword id="KW-0378">Hydrolase</keyword>
<keyword id="KW-0460">Magnesium</keyword>
<keyword id="KW-0479">Metal-binding</keyword>
<keyword id="KW-0507">mRNA processing</keyword>
<keyword id="KW-0540">Nuclease</keyword>
<keyword id="KW-1185">Reference proteome</keyword>
<keyword id="KW-0694">RNA-binding</keyword>
<keyword id="KW-0698">rRNA processing</keyword>
<keyword id="KW-0699">rRNA-binding</keyword>
<keyword id="KW-0819">tRNA processing</keyword>
<gene>
    <name type="primary">rnc</name>
    <name type="ordered locus">MSMEG_2418</name>
    <name type="ordered locus">MSMEI_2357</name>
</gene>
<sequence length="230" mass="24205">MTDSHAALLEALGVALPAELLTIALTHRSYSYENGGLPTNERLEFLGDAVLGLTITEELYHRHPDRAEGDLAKLRASIVNTQALADVGRGLTDEGLGAHLFLGKGEENSGGADKSSILADGVESLLGAIYLEHGLTVVREVILRLFGELLDTAPTLGAGLDWKSSLQELTAARGLGAPAYVVTSTGPDHDKEFSATVVIGEAEYGHGVGRTKKEAELKAAASAYKTLDES</sequence>
<accession>A0QV20</accession>
<proteinExistence type="inferred from homology"/>
<evidence type="ECO:0000250" key="1"/>
<evidence type="ECO:0000269" key="2">
    <source>
    </source>
</evidence>
<evidence type="ECO:0000305" key="3"/>
<reference key="1">
    <citation type="submission" date="2006-10" db="EMBL/GenBank/DDBJ databases">
        <authorList>
            <person name="Fleischmann R.D."/>
            <person name="Dodson R.J."/>
            <person name="Haft D.H."/>
            <person name="Merkel J.S."/>
            <person name="Nelson W.C."/>
            <person name="Fraser C.M."/>
        </authorList>
    </citation>
    <scope>NUCLEOTIDE SEQUENCE [LARGE SCALE GENOMIC DNA]</scope>
    <source>
        <strain>ATCC 700084 / mc(2)155</strain>
    </source>
</reference>
<reference key="2">
    <citation type="journal article" date="2007" name="Genome Biol.">
        <title>Interrupted coding sequences in Mycobacterium smegmatis: authentic mutations or sequencing errors?</title>
        <authorList>
            <person name="Deshayes C."/>
            <person name="Perrodou E."/>
            <person name="Gallien S."/>
            <person name="Euphrasie D."/>
            <person name="Schaeffer C."/>
            <person name="Van-Dorsselaer A."/>
            <person name="Poch O."/>
            <person name="Lecompte O."/>
            <person name="Reyrat J.-M."/>
        </authorList>
    </citation>
    <scope>NUCLEOTIDE SEQUENCE [LARGE SCALE GENOMIC DNA]</scope>
    <source>
        <strain>ATCC 700084 / mc(2)155</strain>
    </source>
</reference>
<reference key="3">
    <citation type="journal article" date="2009" name="Genome Res.">
        <title>Ortho-proteogenomics: multiple proteomes investigation through orthology and a new MS-based protocol.</title>
        <authorList>
            <person name="Gallien S."/>
            <person name="Perrodou E."/>
            <person name="Carapito C."/>
            <person name="Deshayes C."/>
            <person name="Reyrat J.-M."/>
            <person name="Van Dorsselaer A."/>
            <person name="Poch O."/>
            <person name="Schaeffer C."/>
            <person name="Lecompte O."/>
        </authorList>
    </citation>
    <scope>NUCLEOTIDE SEQUENCE [LARGE SCALE GENOMIC DNA]</scope>
    <source>
        <strain>ATCC 700084 / mc(2)155</strain>
    </source>
</reference>
<reference key="4">
    <citation type="journal article" date="2011" name="Mol. Microbiol.">
        <title>Mycobacterium smegmatis RNase J is a 5'-3' exo-/endoribonuclease and both RNase J and RNase E are involved in ribosomal RNA maturation.</title>
        <authorList>
            <person name="Taverniti V."/>
            <person name="Forti F."/>
            <person name="Ghisotti D."/>
            <person name="Putzer H."/>
        </authorList>
    </citation>
    <scope>FUNCTION</scope>
    <source>
        <strain>ATCC 700084 / mc(2)155</strain>
    </source>
</reference>
<dbReference type="EC" id="3.1.26.3"/>
<dbReference type="EMBL" id="CP000480">
    <property type="protein sequence ID" value="ABK72959.1"/>
    <property type="molecule type" value="Genomic_DNA"/>
</dbReference>
<dbReference type="EMBL" id="CP001663">
    <property type="protein sequence ID" value="AFP38825.1"/>
    <property type="molecule type" value="Genomic_DNA"/>
</dbReference>
<dbReference type="RefSeq" id="WP_011728329.1">
    <property type="nucleotide sequence ID" value="NZ_SIJM01000012.1"/>
</dbReference>
<dbReference type="RefSeq" id="YP_886758.1">
    <property type="nucleotide sequence ID" value="NC_008596.1"/>
</dbReference>
<dbReference type="SMR" id="A0QV20"/>
<dbReference type="STRING" id="246196.MSMEG_2418"/>
<dbReference type="PaxDb" id="246196-MSMEI_2357"/>
<dbReference type="GeneID" id="93457209"/>
<dbReference type="KEGG" id="msb:LJ00_12025"/>
<dbReference type="KEGG" id="msg:MSMEI_2357"/>
<dbReference type="KEGG" id="msm:MSMEG_2418"/>
<dbReference type="PATRIC" id="fig|246196.19.peg.2383"/>
<dbReference type="eggNOG" id="COG0571">
    <property type="taxonomic scope" value="Bacteria"/>
</dbReference>
<dbReference type="OrthoDB" id="9805026at2"/>
<dbReference type="Proteomes" id="UP000000757">
    <property type="component" value="Chromosome"/>
</dbReference>
<dbReference type="Proteomes" id="UP000006158">
    <property type="component" value="Chromosome"/>
</dbReference>
<dbReference type="GO" id="GO:0005737">
    <property type="term" value="C:cytoplasm"/>
    <property type="evidence" value="ECO:0007669"/>
    <property type="project" value="UniProtKB-SubCell"/>
</dbReference>
<dbReference type="GO" id="GO:0003725">
    <property type="term" value="F:double-stranded RNA binding"/>
    <property type="evidence" value="ECO:0007669"/>
    <property type="project" value="TreeGrafter"/>
</dbReference>
<dbReference type="GO" id="GO:0046872">
    <property type="term" value="F:metal ion binding"/>
    <property type="evidence" value="ECO:0007669"/>
    <property type="project" value="UniProtKB-KW"/>
</dbReference>
<dbReference type="GO" id="GO:0004525">
    <property type="term" value="F:ribonuclease III activity"/>
    <property type="evidence" value="ECO:0007669"/>
    <property type="project" value="UniProtKB-UniRule"/>
</dbReference>
<dbReference type="GO" id="GO:0019843">
    <property type="term" value="F:rRNA binding"/>
    <property type="evidence" value="ECO:0007669"/>
    <property type="project" value="UniProtKB-KW"/>
</dbReference>
<dbReference type="GO" id="GO:0006397">
    <property type="term" value="P:mRNA processing"/>
    <property type="evidence" value="ECO:0007669"/>
    <property type="project" value="UniProtKB-UniRule"/>
</dbReference>
<dbReference type="GO" id="GO:0010468">
    <property type="term" value="P:regulation of gene expression"/>
    <property type="evidence" value="ECO:0007669"/>
    <property type="project" value="TreeGrafter"/>
</dbReference>
<dbReference type="GO" id="GO:0006364">
    <property type="term" value="P:rRNA processing"/>
    <property type="evidence" value="ECO:0007669"/>
    <property type="project" value="UniProtKB-UniRule"/>
</dbReference>
<dbReference type="GO" id="GO:0008033">
    <property type="term" value="P:tRNA processing"/>
    <property type="evidence" value="ECO:0007669"/>
    <property type="project" value="UniProtKB-KW"/>
</dbReference>
<dbReference type="CDD" id="cd10845">
    <property type="entry name" value="DSRM_RNAse_III_family"/>
    <property type="match status" value="1"/>
</dbReference>
<dbReference type="CDD" id="cd00593">
    <property type="entry name" value="RIBOc"/>
    <property type="match status" value="1"/>
</dbReference>
<dbReference type="FunFam" id="1.10.1520.10:FF:000001">
    <property type="entry name" value="Ribonuclease 3"/>
    <property type="match status" value="1"/>
</dbReference>
<dbReference type="FunFam" id="3.30.160.20:FF:000003">
    <property type="entry name" value="Ribonuclease 3"/>
    <property type="match status" value="1"/>
</dbReference>
<dbReference type="Gene3D" id="3.30.160.20">
    <property type="match status" value="1"/>
</dbReference>
<dbReference type="Gene3D" id="1.10.1520.10">
    <property type="entry name" value="Ribonuclease III domain"/>
    <property type="match status" value="1"/>
</dbReference>
<dbReference type="HAMAP" id="MF_00104">
    <property type="entry name" value="RNase_III"/>
    <property type="match status" value="1"/>
</dbReference>
<dbReference type="InterPro" id="IPR014720">
    <property type="entry name" value="dsRBD_dom"/>
</dbReference>
<dbReference type="InterPro" id="IPR011907">
    <property type="entry name" value="RNase_III"/>
</dbReference>
<dbReference type="InterPro" id="IPR000999">
    <property type="entry name" value="RNase_III_dom"/>
</dbReference>
<dbReference type="InterPro" id="IPR036389">
    <property type="entry name" value="RNase_III_sf"/>
</dbReference>
<dbReference type="NCBIfam" id="TIGR02191">
    <property type="entry name" value="RNaseIII"/>
    <property type="match status" value="1"/>
</dbReference>
<dbReference type="PANTHER" id="PTHR11207:SF0">
    <property type="entry name" value="RIBONUCLEASE 3"/>
    <property type="match status" value="1"/>
</dbReference>
<dbReference type="PANTHER" id="PTHR11207">
    <property type="entry name" value="RIBONUCLEASE III"/>
    <property type="match status" value="1"/>
</dbReference>
<dbReference type="Pfam" id="PF00035">
    <property type="entry name" value="dsrm"/>
    <property type="match status" value="1"/>
</dbReference>
<dbReference type="Pfam" id="PF14622">
    <property type="entry name" value="Ribonucleas_3_3"/>
    <property type="match status" value="1"/>
</dbReference>
<dbReference type="SMART" id="SM00358">
    <property type="entry name" value="DSRM"/>
    <property type="match status" value="1"/>
</dbReference>
<dbReference type="SMART" id="SM00535">
    <property type="entry name" value="RIBOc"/>
    <property type="match status" value="1"/>
</dbReference>
<dbReference type="SUPFAM" id="SSF54768">
    <property type="entry name" value="dsRNA-binding domain-like"/>
    <property type="match status" value="1"/>
</dbReference>
<dbReference type="SUPFAM" id="SSF69065">
    <property type="entry name" value="RNase III domain-like"/>
    <property type="match status" value="1"/>
</dbReference>
<dbReference type="PROSITE" id="PS50137">
    <property type="entry name" value="DS_RBD"/>
    <property type="match status" value="1"/>
</dbReference>
<dbReference type="PROSITE" id="PS00517">
    <property type="entry name" value="RNASE_3_1"/>
    <property type="match status" value="1"/>
</dbReference>
<dbReference type="PROSITE" id="PS50142">
    <property type="entry name" value="RNASE_3_2"/>
    <property type="match status" value="1"/>
</dbReference>